<gene>
    <name evidence="1" type="primary">guaA</name>
    <name type="ordered locus">Bphyt_2429</name>
</gene>
<evidence type="ECO:0000255" key="1">
    <source>
        <dbReference type="HAMAP-Rule" id="MF_00344"/>
    </source>
</evidence>
<dbReference type="EC" id="6.3.5.2" evidence="1"/>
<dbReference type="EMBL" id="CP001052">
    <property type="protein sequence ID" value="ACD16825.1"/>
    <property type="molecule type" value="Genomic_DNA"/>
</dbReference>
<dbReference type="RefSeq" id="WP_012433422.1">
    <property type="nucleotide sequence ID" value="NC_010681.1"/>
</dbReference>
<dbReference type="SMR" id="B2T5G8"/>
<dbReference type="STRING" id="398527.Bphyt_2429"/>
<dbReference type="KEGG" id="bpy:Bphyt_2429"/>
<dbReference type="eggNOG" id="COG0518">
    <property type="taxonomic scope" value="Bacteria"/>
</dbReference>
<dbReference type="eggNOG" id="COG0519">
    <property type="taxonomic scope" value="Bacteria"/>
</dbReference>
<dbReference type="HOGENOM" id="CLU_014340_0_5_4"/>
<dbReference type="OrthoDB" id="9802219at2"/>
<dbReference type="UniPathway" id="UPA00189">
    <property type="reaction ID" value="UER00296"/>
</dbReference>
<dbReference type="Proteomes" id="UP000001739">
    <property type="component" value="Chromosome 1"/>
</dbReference>
<dbReference type="GO" id="GO:0005829">
    <property type="term" value="C:cytosol"/>
    <property type="evidence" value="ECO:0007669"/>
    <property type="project" value="TreeGrafter"/>
</dbReference>
<dbReference type="GO" id="GO:0005524">
    <property type="term" value="F:ATP binding"/>
    <property type="evidence" value="ECO:0007669"/>
    <property type="project" value="UniProtKB-UniRule"/>
</dbReference>
<dbReference type="GO" id="GO:0003921">
    <property type="term" value="F:GMP synthase activity"/>
    <property type="evidence" value="ECO:0007669"/>
    <property type="project" value="InterPro"/>
</dbReference>
<dbReference type="CDD" id="cd01742">
    <property type="entry name" value="GATase1_GMP_Synthase"/>
    <property type="match status" value="1"/>
</dbReference>
<dbReference type="CDD" id="cd01997">
    <property type="entry name" value="GMP_synthase_C"/>
    <property type="match status" value="1"/>
</dbReference>
<dbReference type="FunFam" id="3.30.300.10:FF:000002">
    <property type="entry name" value="GMP synthase [glutamine-hydrolyzing]"/>
    <property type="match status" value="1"/>
</dbReference>
<dbReference type="FunFam" id="3.40.50.620:FF:000001">
    <property type="entry name" value="GMP synthase [glutamine-hydrolyzing]"/>
    <property type="match status" value="1"/>
</dbReference>
<dbReference type="FunFam" id="3.40.50.880:FF:000001">
    <property type="entry name" value="GMP synthase [glutamine-hydrolyzing]"/>
    <property type="match status" value="1"/>
</dbReference>
<dbReference type="Gene3D" id="3.30.300.10">
    <property type="match status" value="1"/>
</dbReference>
<dbReference type="Gene3D" id="3.40.50.880">
    <property type="match status" value="1"/>
</dbReference>
<dbReference type="Gene3D" id="3.40.50.620">
    <property type="entry name" value="HUPs"/>
    <property type="match status" value="1"/>
</dbReference>
<dbReference type="HAMAP" id="MF_00344">
    <property type="entry name" value="GMP_synthase"/>
    <property type="match status" value="1"/>
</dbReference>
<dbReference type="InterPro" id="IPR029062">
    <property type="entry name" value="Class_I_gatase-like"/>
</dbReference>
<dbReference type="InterPro" id="IPR017926">
    <property type="entry name" value="GATASE"/>
</dbReference>
<dbReference type="InterPro" id="IPR001674">
    <property type="entry name" value="GMP_synth_C"/>
</dbReference>
<dbReference type="InterPro" id="IPR004739">
    <property type="entry name" value="GMP_synth_GATase"/>
</dbReference>
<dbReference type="InterPro" id="IPR022955">
    <property type="entry name" value="GMP_synthase"/>
</dbReference>
<dbReference type="InterPro" id="IPR025777">
    <property type="entry name" value="GMPS_ATP_PPase_dom"/>
</dbReference>
<dbReference type="InterPro" id="IPR022310">
    <property type="entry name" value="NAD/GMP_synthase"/>
</dbReference>
<dbReference type="InterPro" id="IPR014729">
    <property type="entry name" value="Rossmann-like_a/b/a_fold"/>
</dbReference>
<dbReference type="NCBIfam" id="TIGR00884">
    <property type="entry name" value="guaA_Cterm"/>
    <property type="match status" value="1"/>
</dbReference>
<dbReference type="NCBIfam" id="TIGR00888">
    <property type="entry name" value="guaA_Nterm"/>
    <property type="match status" value="1"/>
</dbReference>
<dbReference type="NCBIfam" id="NF000848">
    <property type="entry name" value="PRK00074.1"/>
    <property type="match status" value="1"/>
</dbReference>
<dbReference type="PANTHER" id="PTHR11922:SF2">
    <property type="entry name" value="GMP SYNTHASE [GLUTAMINE-HYDROLYZING]"/>
    <property type="match status" value="1"/>
</dbReference>
<dbReference type="PANTHER" id="PTHR11922">
    <property type="entry name" value="GMP SYNTHASE-RELATED"/>
    <property type="match status" value="1"/>
</dbReference>
<dbReference type="Pfam" id="PF00117">
    <property type="entry name" value="GATase"/>
    <property type="match status" value="1"/>
</dbReference>
<dbReference type="Pfam" id="PF00958">
    <property type="entry name" value="GMP_synt_C"/>
    <property type="match status" value="1"/>
</dbReference>
<dbReference type="Pfam" id="PF02540">
    <property type="entry name" value="NAD_synthase"/>
    <property type="match status" value="1"/>
</dbReference>
<dbReference type="PRINTS" id="PR00097">
    <property type="entry name" value="ANTSNTHASEII"/>
</dbReference>
<dbReference type="PRINTS" id="PR00099">
    <property type="entry name" value="CPSGATASE"/>
</dbReference>
<dbReference type="PRINTS" id="PR00096">
    <property type="entry name" value="GATASE"/>
</dbReference>
<dbReference type="SUPFAM" id="SSF52402">
    <property type="entry name" value="Adenine nucleotide alpha hydrolases-like"/>
    <property type="match status" value="1"/>
</dbReference>
<dbReference type="SUPFAM" id="SSF52317">
    <property type="entry name" value="Class I glutamine amidotransferase-like"/>
    <property type="match status" value="1"/>
</dbReference>
<dbReference type="SUPFAM" id="SSF54810">
    <property type="entry name" value="GMP synthetase C-terminal dimerisation domain"/>
    <property type="match status" value="1"/>
</dbReference>
<dbReference type="PROSITE" id="PS51273">
    <property type="entry name" value="GATASE_TYPE_1"/>
    <property type="match status" value="1"/>
</dbReference>
<dbReference type="PROSITE" id="PS51553">
    <property type="entry name" value="GMPS_ATP_PPASE"/>
    <property type="match status" value="1"/>
</dbReference>
<proteinExistence type="inferred from homology"/>
<feature type="chain" id="PRO_1000120242" description="GMP synthase [glutamine-hydrolyzing]">
    <location>
        <begin position="1"/>
        <end position="527"/>
    </location>
</feature>
<feature type="domain" description="Glutamine amidotransferase type-1" evidence="1">
    <location>
        <begin position="4"/>
        <end position="202"/>
    </location>
</feature>
<feature type="domain" description="GMPS ATP-PPase" evidence="1">
    <location>
        <begin position="203"/>
        <end position="395"/>
    </location>
</feature>
<feature type="active site" description="Nucleophile" evidence="1">
    <location>
        <position position="81"/>
    </location>
</feature>
<feature type="active site" evidence="1">
    <location>
        <position position="176"/>
    </location>
</feature>
<feature type="active site" evidence="1">
    <location>
        <position position="178"/>
    </location>
</feature>
<feature type="binding site" evidence="1">
    <location>
        <begin position="230"/>
        <end position="236"/>
    </location>
    <ligand>
        <name>ATP</name>
        <dbReference type="ChEBI" id="CHEBI:30616"/>
    </ligand>
</feature>
<name>GUAA_PARPJ</name>
<protein>
    <recommendedName>
        <fullName evidence="1">GMP synthase [glutamine-hydrolyzing]</fullName>
        <ecNumber evidence="1">6.3.5.2</ecNumber>
    </recommendedName>
    <alternativeName>
        <fullName evidence="1">GMP synthetase</fullName>
    </alternativeName>
    <alternativeName>
        <fullName evidence="1">Glutamine amidotransferase</fullName>
    </alternativeName>
</protein>
<comment type="function">
    <text evidence="1">Catalyzes the synthesis of GMP from XMP.</text>
</comment>
<comment type="catalytic activity">
    <reaction evidence="1">
        <text>XMP + L-glutamine + ATP + H2O = GMP + L-glutamate + AMP + diphosphate + 2 H(+)</text>
        <dbReference type="Rhea" id="RHEA:11680"/>
        <dbReference type="ChEBI" id="CHEBI:15377"/>
        <dbReference type="ChEBI" id="CHEBI:15378"/>
        <dbReference type="ChEBI" id="CHEBI:29985"/>
        <dbReference type="ChEBI" id="CHEBI:30616"/>
        <dbReference type="ChEBI" id="CHEBI:33019"/>
        <dbReference type="ChEBI" id="CHEBI:57464"/>
        <dbReference type="ChEBI" id="CHEBI:58115"/>
        <dbReference type="ChEBI" id="CHEBI:58359"/>
        <dbReference type="ChEBI" id="CHEBI:456215"/>
        <dbReference type="EC" id="6.3.5.2"/>
    </reaction>
</comment>
<comment type="pathway">
    <text evidence="1">Purine metabolism; GMP biosynthesis; GMP from XMP (L-Gln route): step 1/1.</text>
</comment>
<comment type="subunit">
    <text evidence="1">Homodimer.</text>
</comment>
<sequence>MHDKILILDFGSQVTQLIARRVREANVYSEIHPYDVDASFIRDFAPKGVILSGGPSSVTETDTPRVPQAVFELGVPVLGICYGMQAMAEQLGGKVDIGHLREFGYAEVRARNHTSLLEGIKDFTTPEGHGMLKVWMSHGDKVLEMPPGFALMASTESCPIAAMADEKRHFYGLQWHPEVTHTVQGRAMLERFVLQICGARADWEMGNYIDEAVAKIREQVGNEHVILGLSGGVDSSVAAALLHRAIGDQLTCVFVDHGLLRLNEAEQVMATFADHLGVKVIHVDASEVFLRKLAGVTDPEAKRKIIGAEFVEVFQAEAGRLTDAKWLAQGTIYPDVIESAGKGKKGAQTIKSHHNVGGLPETLNLKLLEPLRELFKDEVRELGVKLGLPPAMVYRHPFPGPGLGVRILGEVKRDFADLLRRADAIFIETLRTFIDKETGKSWYDLTSQAFAVFLPVKSVGVMGDGRTYEYVVALRAVQTLDFMTAHWAHLPHELLGHVSNRIINEVRGINRVVYDISGKPPATIEWE</sequence>
<organism>
    <name type="scientific">Paraburkholderia phytofirmans (strain DSM 17436 / LMG 22146 / PsJN)</name>
    <name type="common">Burkholderia phytofirmans</name>
    <dbReference type="NCBI Taxonomy" id="398527"/>
    <lineage>
        <taxon>Bacteria</taxon>
        <taxon>Pseudomonadati</taxon>
        <taxon>Pseudomonadota</taxon>
        <taxon>Betaproteobacteria</taxon>
        <taxon>Burkholderiales</taxon>
        <taxon>Burkholderiaceae</taxon>
        <taxon>Paraburkholderia</taxon>
    </lineage>
</organism>
<accession>B2T5G8</accession>
<reference key="1">
    <citation type="journal article" date="2011" name="J. Bacteriol.">
        <title>Complete genome sequence of the plant growth-promoting endophyte Burkholderia phytofirmans strain PsJN.</title>
        <authorList>
            <person name="Weilharter A."/>
            <person name="Mitter B."/>
            <person name="Shin M.V."/>
            <person name="Chain P.S."/>
            <person name="Nowak J."/>
            <person name="Sessitsch A."/>
        </authorList>
    </citation>
    <scope>NUCLEOTIDE SEQUENCE [LARGE SCALE GENOMIC DNA]</scope>
    <source>
        <strain>DSM 17436 / LMG 22146 / PsJN</strain>
    </source>
</reference>
<keyword id="KW-0067">ATP-binding</keyword>
<keyword id="KW-0315">Glutamine amidotransferase</keyword>
<keyword id="KW-0332">GMP biosynthesis</keyword>
<keyword id="KW-0436">Ligase</keyword>
<keyword id="KW-0547">Nucleotide-binding</keyword>
<keyword id="KW-0658">Purine biosynthesis</keyword>